<accession>P36167</accession>
<accession>D6VXF1</accession>
<feature type="chain" id="PRO_0000203228" description="Protein SRL3">
    <location>
        <begin position="1"/>
        <end position="246"/>
    </location>
</feature>
<feature type="region of interest" description="Disordered" evidence="1">
    <location>
        <begin position="49"/>
        <end position="68"/>
    </location>
</feature>
<feature type="region of interest" description="Disordered" evidence="1">
    <location>
        <begin position="200"/>
        <end position="229"/>
    </location>
</feature>
<feature type="compositionally biased region" description="Polar residues" evidence="1">
    <location>
        <begin position="49"/>
        <end position="61"/>
    </location>
</feature>
<feature type="modified residue" description="Phosphoserine" evidence="6 7">
    <location>
        <position position="212"/>
    </location>
</feature>
<protein>
    <recommendedName>
        <fullName>Protein SRL3</fullName>
    </recommendedName>
    <alternativeName>
        <fullName>RAD53 lethality suppressor protein 3</fullName>
    </alternativeName>
</protein>
<evidence type="ECO:0000256" key="1">
    <source>
        <dbReference type="SAM" id="MobiDB-lite"/>
    </source>
</evidence>
<evidence type="ECO:0000269" key="2">
    <source>
    </source>
</evidence>
<evidence type="ECO:0000269" key="3">
    <source>
    </source>
</evidence>
<evidence type="ECO:0000269" key="4">
    <source>
    </source>
</evidence>
<evidence type="ECO:0000305" key="5"/>
<evidence type="ECO:0007744" key="6">
    <source>
    </source>
</evidence>
<evidence type="ECO:0007744" key="7">
    <source>
    </source>
</evidence>
<reference key="1">
    <citation type="journal article" date="1993" name="Yeast">
        <title>The complete sequence of a 15,820 bp segment of Saccharomyces cerevisiae chromosome XI contains the UBI2 and MPL1 genes and three new open reading frames.</title>
        <authorList>
            <person name="Bou G."/>
            <person name="Esteban P.F."/>
            <person name="Baladron V."/>
            <person name="Gonzalez G.A."/>
            <person name="Cantalejo J.G."/>
            <person name="Remacha M.A."/>
            <person name="Jimenez A."/>
            <person name="del Rey F."/>
            <person name="Ballesta J.P.G."/>
            <person name="Revuelta J.L."/>
        </authorList>
    </citation>
    <scope>NUCLEOTIDE SEQUENCE [GENOMIC DNA]</scope>
</reference>
<reference key="2">
    <citation type="journal article" date="1994" name="Nature">
        <title>Complete DNA sequence of yeast chromosome XI.</title>
        <authorList>
            <person name="Dujon B."/>
            <person name="Alexandraki D."/>
            <person name="Andre B."/>
            <person name="Ansorge W."/>
            <person name="Baladron V."/>
            <person name="Ballesta J.P.G."/>
            <person name="Banrevi A."/>
            <person name="Bolle P.-A."/>
            <person name="Bolotin-Fukuhara M."/>
            <person name="Bossier P."/>
            <person name="Bou G."/>
            <person name="Boyer J."/>
            <person name="Buitrago M.J."/>
            <person name="Cheret G."/>
            <person name="Colleaux L."/>
            <person name="Daignan-Fornier B."/>
            <person name="del Rey F."/>
            <person name="Dion C."/>
            <person name="Domdey H."/>
            <person name="Duesterhoeft A."/>
            <person name="Duesterhus S."/>
            <person name="Entian K.-D."/>
            <person name="Erfle H."/>
            <person name="Esteban P.F."/>
            <person name="Feldmann H."/>
            <person name="Fernandes L."/>
            <person name="Fobo G.M."/>
            <person name="Fritz C."/>
            <person name="Fukuhara H."/>
            <person name="Gabel C."/>
            <person name="Gaillon L."/>
            <person name="Garcia-Cantalejo J.M."/>
            <person name="Garcia-Ramirez J.J."/>
            <person name="Gent M.E."/>
            <person name="Ghazvini M."/>
            <person name="Goffeau A."/>
            <person name="Gonzalez A."/>
            <person name="Grothues D."/>
            <person name="Guerreiro P."/>
            <person name="Hegemann J.H."/>
            <person name="Hewitt N."/>
            <person name="Hilger F."/>
            <person name="Hollenberg C.P."/>
            <person name="Horaitis O."/>
            <person name="Indge K.J."/>
            <person name="Jacquier A."/>
            <person name="James C.M."/>
            <person name="Jauniaux J.-C."/>
            <person name="Jimenez A."/>
            <person name="Keuchel H."/>
            <person name="Kirchrath L."/>
            <person name="Kleine K."/>
            <person name="Koetter P."/>
            <person name="Legrain P."/>
            <person name="Liebl S."/>
            <person name="Louis E.J."/>
            <person name="Maia e Silva A."/>
            <person name="Marck C."/>
            <person name="Monnier A.-L."/>
            <person name="Moestl D."/>
            <person name="Mueller S."/>
            <person name="Obermaier B."/>
            <person name="Oliver S.G."/>
            <person name="Pallier C."/>
            <person name="Pascolo S."/>
            <person name="Pfeiffer F."/>
            <person name="Philippsen P."/>
            <person name="Planta R.J."/>
            <person name="Pohl F.M."/>
            <person name="Pohl T.M."/>
            <person name="Poehlmann R."/>
            <person name="Portetelle D."/>
            <person name="Purnelle B."/>
            <person name="Puzos V."/>
            <person name="Ramezani Rad M."/>
            <person name="Rasmussen S.W."/>
            <person name="Remacha M.A."/>
            <person name="Revuelta J.L."/>
            <person name="Richard G.-F."/>
            <person name="Rieger M."/>
            <person name="Rodrigues-Pousada C."/>
            <person name="Rose M."/>
            <person name="Rupp T."/>
            <person name="Santos M.A."/>
            <person name="Schwager C."/>
            <person name="Sensen C."/>
            <person name="Skala J."/>
            <person name="Soares H."/>
            <person name="Sor F."/>
            <person name="Stegemann J."/>
            <person name="Tettelin H."/>
            <person name="Thierry A."/>
            <person name="Tzermia M."/>
            <person name="Urrestarazu L.A."/>
            <person name="van Dyck L."/>
            <person name="van Vliet-Reedijk J.C."/>
            <person name="Valens M."/>
            <person name="Vandenbol M."/>
            <person name="Vilela C."/>
            <person name="Vissers S."/>
            <person name="von Wettstein D."/>
            <person name="Voss H."/>
            <person name="Wiemann S."/>
            <person name="Xu G."/>
            <person name="Zimmermann J."/>
            <person name="Haasemann M."/>
            <person name="Becker I."/>
            <person name="Mewes H.-W."/>
        </authorList>
    </citation>
    <scope>NUCLEOTIDE SEQUENCE [LARGE SCALE GENOMIC DNA]</scope>
    <source>
        <strain>ATCC 204508 / S288c</strain>
    </source>
</reference>
<reference key="3">
    <citation type="journal article" date="2014" name="G3 (Bethesda)">
        <title>The reference genome sequence of Saccharomyces cerevisiae: Then and now.</title>
        <authorList>
            <person name="Engel S.R."/>
            <person name="Dietrich F.S."/>
            <person name="Fisk D.G."/>
            <person name="Binkley G."/>
            <person name="Balakrishnan R."/>
            <person name="Costanzo M.C."/>
            <person name="Dwight S.S."/>
            <person name="Hitz B.C."/>
            <person name="Karra K."/>
            <person name="Nash R.S."/>
            <person name="Weng S."/>
            <person name="Wong E.D."/>
            <person name="Lloyd P."/>
            <person name="Skrzypek M.S."/>
            <person name="Miyasato S.R."/>
            <person name="Simison M."/>
            <person name="Cherry J.M."/>
        </authorList>
    </citation>
    <scope>GENOME REANNOTATION</scope>
    <source>
        <strain>ATCC 204508 / S288c</strain>
    </source>
</reference>
<reference key="4">
    <citation type="journal article" date="2007" name="Genome Res.">
        <title>Approaching a complete repository of sequence-verified protein-encoding clones for Saccharomyces cerevisiae.</title>
        <authorList>
            <person name="Hu Y."/>
            <person name="Rolfs A."/>
            <person name="Bhullar B."/>
            <person name="Murthy T.V.S."/>
            <person name="Zhu C."/>
            <person name="Berger M.F."/>
            <person name="Camargo A.A."/>
            <person name="Kelley F."/>
            <person name="McCarron S."/>
            <person name="Jepson D."/>
            <person name="Richardson A."/>
            <person name="Raphael J."/>
            <person name="Moreira D."/>
            <person name="Taycher E."/>
            <person name="Zuo D."/>
            <person name="Mohr S."/>
            <person name="Kane M.F."/>
            <person name="Williamson J."/>
            <person name="Simpson A.J.G."/>
            <person name="Bulyk M.L."/>
            <person name="Harlow E."/>
            <person name="Marsischky G."/>
            <person name="Kolodner R.D."/>
            <person name="LaBaer J."/>
        </authorList>
    </citation>
    <scope>NUCLEOTIDE SEQUENCE [GENOMIC DNA] OF 95-246</scope>
    <source>
        <strain>ATCC 204508 / S288c</strain>
    </source>
</reference>
<reference key="5">
    <citation type="journal article" date="2002" name="Genes Dev.">
        <title>Subcellular localization of the yeast proteome.</title>
        <authorList>
            <person name="Kumar A."/>
            <person name="Agarwal S."/>
            <person name="Heyman J.A."/>
            <person name="Matson S."/>
            <person name="Heidtman M."/>
            <person name="Piccirillo S."/>
            <person name="Umansky L."/>
            <person name="Drawid A."/>
            <person name="Jansen R."/>
            <person name="Liu Y."/>
            <person name="Cheung K.-H."/>
            <person name="Miller P."/>
            <person name="Gerstein M."/>
            <person name="Roeder G.S."/>
            <person name="Snyder M."/>
        </authorList>
    </citation>
    <scope>SUBCELLULAR LOCATION</scope>
</reference>
<reference key="6">
    <citation type="journal article" date="2003" name="Nature">
        <title>Sequencing and comparison of yeast species to identify genes and regulatory elements.</title>
        <authorList>
            <person name="Kellis M."/>
            <person name="Patterson N."/>
            <person name="Endrizzi M."/>
            <person name="Birren B.W."/>
            <person name="Lander E.S."/>
        </authorList>
    </citation>
    <scope>IDENTIFICATION OF FRAMESHIFT</scope>
</reference>
<reference key="7">
    <citation type="journal article" date="2003" name="Nature">
        <title>Targets of the cyclin-dependent kinase Cdk1.</title>
        <authorList>
            <person name="Ubersax J.A."/>
            <person name="Woodbury E.L."/>
            <person name="Quang P.N."/>
            <person name="Paraz M."/>
            <person name="Blethrow J.D."/>
            <person name="Shah K."/>
            <person name="Shokat K.M."/>
            <person name="Morgan D.O."/>
        </authorList>
    </citation>
    <scope>PHOSPHORYLATION BY CDC28</scope>
</reference>
<reference key="8">
    <citation type="journal article" date="2004" name="Mol. Cell">
        <title>Targeted proteomic study of the cyclin-Cdk module.</title>
        <authorList>
            <person name="Archambault V."/>
            <person name="Chang E.J."/>
            <person name="Drapkin B.J."/>
            <person name="Cross F.R."/>
            <person name="Chait B.T."/>
            <person name="Rout M.P."/>
        </authorList>
    </citation>
    <scope>INTERACTION WITH CLN2</scope>
    <scope>IDENTIFICATION BY MASS SPECTROMETRY</scope>
</reference>
<reference key="9">
    <citation type="journal article" date="2008" name="Mol. Cell. Proteomics">
        <title>A multidimensional chromatography technology for in-depth phosphoproteome analysis.</title>
        <authorList>
            <person name="Albuquerque C.P."/>
            <person name="Smolka M.B."/>
            <person name="Payne S.H."/>
            <person name="Bafna V."/>
            <person name="Eng J."/>
            <person name="Zhou H."/>
        </authorList>
    </citation>
    <scope>PHOSPHORYLATION [LARGE SCALE ANALYSIS] AT SER-212</scope>
    <scope>IDENTIFICATION BY MASS SPECTROMETRY [LARGE SCALE ANALYSIS]</scope>
</reference>
<reference key="10">
    <citation type="journal article" date="2009" name="Science">
        <title>Global analysis of Cdk1 substrate phosphorylation sites provides insights into evolution.</title>
        <authorList>
            <person name="Holt L.J."/>
            <person name="Tuch B.B."/>
            <person name="Villen J."/>
            <person name="Johnson A.D."/>
            <person name="Gygi S.P."/>
            <person name="Morgan D.O."/>
        </authorList>
    </citation>
    <scope>PHOSPHORYLATION [LARGE SCALE ANALYSIS] AT SER-212</scope>
    <scope>IDENTIFICATION BY MASS SPECTROMETRY [LARGE SCALE ANALYSIS]</scope>
</reference>
<name>SRL3_YEAST</name>
<keyword id="KW-0963">Cytoplasm</keyword>
<keyword id="KW-0597">Phosphoprotein</keyword>
<keyword id="KW-1185">Reference proteome</keyword>
<organism>
    <name type="scientific">Saccharomyces cerevisiae (strain ATCC 204508 / S288c)</name>
    <name type="common">Baker's yeast</name>
    <dbReference type="NCBI Taxonomy" id="559292"/>
    <lineage>
        <taxon>Eukaryota</taxon>
        <taxon>Fungi</taxon>
        <taxon>Dikarya</taxon>
        <taxon>Ascomycota</taxon>
        <taxon>Saccharomycotina</taxon>
        <taxon>Saccharomycetes</taxon>
        <taxon>Saccharomycetales</taxon>
        <taxon>Saccharomycetaceae</taxon>
        <taxon>Saccharomyces</taxon>
    </lineage>
</organism>
<sequence length="246" mass="27466">MFLKTPNWETVNETPKSRVLTINELISPNLDTESNSLLATPARKYFKTSISEAQDSPTSAPSPDGNEDPTYQYNVQFHFPGPITPTTPRSKNAEMFPSPTPPLVSPTAVIEEENDDSVREFSRTLKSRLNCAMVKLSKEHEQVALIPPPPTEKIRKGSYSNKFAAKHRRCHSLDESKKFLSSLEDSSAHAAFLKAISSKHAKSNRVDNVNVSPLRWSSHRRTQSTQENSLQEVVAIDTLLKMSSSD</sequence>
<proteinExistence type="evidence at protein level"/>
<gene>
    <name type="primary">SRL3</name>
    <name type="ordered locus">YKR091W</name>
    <name type="ORF">YKR411</name>
</gene>
<comment type="function">
    <text>Weakly suppresses a RAD53 null mutation when overexpressed.</text>
</comment>
<comment type="subunit">
    <text evidence="4">Interacts with CLN2.</text>
</comment>
<comment type="subcellular location">
    <subcellularLocation>
        <location evidence="2">Cytoplasm</location>
    </subcellularLocation>
</comment>
<comment type="PTM">
    <text evidence="3">Phosphorylated by CDC28, probably in association with G1 cyclin CLN2.</text>
</comment>
<comment type="sequence caution" evidence="5">
    <conflict type="frameshift">
        <sequence resource="EMBL-CDS" id="CAA51945"/>
    </conflict>
</comment>
<comment type="sequence caution" evidence="5">
    <conflict type="frameshift">
        <sequence resource="EMBL-CDS" id="CAA82170"/>
    </conflict>
</comment>
<dbReference type="EMBL" id="X73541">
    <property type="protein sequence ID" value="CAA51945.1"/>
    <property type="status" value="ALT_FRAME"/>
    <property type="molecule type" value="Genomic_DNA"/>
</dbReference>
<dbReference type="EMBL" id="Z28316">
    <property type="protein sequence ID" value="CAA82170.1"/>
    <property type="status" value="ALT_FRAME"/>
    <property type="molecule type" value="Genomic_DNA"/>
</dbReference>
<dbReference type="EMBL" id="AY558318">
    <property type="protein sequence ID" value="AAS56644.1"/>
    <property type="molecule type" value="Genomic_DNA"/>
</dbReference>
<dbReference type="EMBL" id="BK006944">
    <property type="protein sequence ID" value="DAA09241.1"/>
    <property type="molecule type" value="Genomic_DNA"/>
</dbReference>
<dbReference type="PIR" id="S38169">
    <property type="entry name" value="S38169"/>
</dbReference>
<dbReference type="RefSeq" id="NP_013017.2">
    <property type="nucleotide sequence ID" value="NM_001179881.1"/>
</dbReference>
<dbReference type="BioGRID" id="34222">
    <property type="interactions" value="171"/>
</dbReference>
<dbReference type="DIP" id="DIP-4750N"/>
<dbReference type="FunCoup" id="P36167">
    <property type="interactions" value="71"/>
</dbReference>
<dbReference type="IntAct" id="P36167">
    <property type="interactions" value="7"/>
</dbReference>
<dbReference type="MINT" id="P36167"/>
<dbReference type="STRING" id="4932.YKR091W"/>
<dbReference type="GlyGen" id="P36167">
    <property type="glycosylation" value="4 sites"/>
</dbReference>
<dbReference type="iPTMnet" id="P36167"/>
<dbReference type="PaxDb" id="4932-YKR091W"/>
<dbReference type="PeptideAtlas" id="P36167"/>
<dbReference type="EnsemblFungi" id="YKR091W_mRNA">
    <property type="protein sequence ID" value="YKR091W"/>
    <property type="gene ID" value="YKR091W"/>
</dbReference>
<dbReference type="GeneID" id="853966"/>
<dbReference type="KEGG" id="sce:YKR091W"/>
<dbReference type="AGR" id="SGD:S000001799"/>
<dbReference type="SGD" id="S000001799">
    <property type="gene designation" value="SRL3"/>
</dbReference>
<dbReference type="VEuPathDB" id="FungiDB:YKR091W"/>
<dbReference type="HOGENOM" id="CLU_1070206_0_0_1"/>
<dbReference type="InParanoid" id="P36167"/>
<dbReference type="OMA" id="NCAMVKL"/>
<dbReference type="OrthoDB" id="2359117at2759"/>
<dbReference type="BioCyc" id="YEAST:G3O-32054-MONOMER"/>
<dbReference type="BioGRID-ORCS" id="853966">
    <property type="hits" value="3 hits in 10 CRISPR screens"/>
</dbReference>
<dbReference type="PRO" id="PR:P36167"/>
<dbReference type="Proteomes" id="UP000002311">
    <property type="component" value="Chromosome XI"/>
</dbReference>
<dbReference type="RNAct" id="P36167">
    <property type="molecule type" value="protein"/>
</dbReference>
<dbReference type="GO" id="GO:0005737">
    <property type="term" value="C:cytoplasm"/>
    <property type="evidence" value="ECO:0007005"/>
    <property type="project" value="SGD"/>
</dbReference>
<dbReference type="GO" id="GO:0005634">
    <property type="term" value="C:nucleus"/>
    <property type="evidence" value="ECO:0000314"/>
    <property type="project" value="SGD"/>
</dbReference>
<dbReference type="GO" id="GO:0033309">
    <property type="term" value="C:SBF transcription complex"/>
    <property type="evidence" value="ECO:0000318"/>
    <property type="project" value="GO_Central"/>
</dbReference>
<dbReference type="GO" id="GO:0000978">
    <property type="term" value="F:RNA polymerase II cis-regulatory region sequence-specific DNA binding"/>
    <property type="evidence" value="ECO:0000314"/>
    <property type="project" value="SGD"/>
</dbReference>
<dbReference type="GO" id="GO:0003712">
    <property type="term" value="F:transcription coregulator activity"/>
    <property type="evidence" value="ECO:0000318"/>
    <property type="project" value="GO_Central"/>
</dbReference>
<dbReference type="GO" id="GO:0000082">
    <property type="term" value="P:G1/S transition of mitotic cell cycle"/>
    <property type="evidence" value="ECO:0007669"/>
    <property type="project" value="InterPro"/>
</dbReference>
<dbReference type="GO" id="GO:0006139">
    <property type="term" value="P:nucleobase-containing compound metabolic process"/>
    <property type="evidence" value="ECO:0000315"/>
    <property type="project" value="SGD"/>
</dbReference>
<dbReference type="InterPro" id="IPR039198">
    <property type="entry name" value="Srl3/Whi5"/>
</dbReference>
<dbReference type="PANTHER" id="PTHR28246">
    <property type="entry name" value="G1-SPECIFIC TRANSCRIPTIONAL REPRESSOR WHI5-RELATED"/>
    <property type="match status" value="1"/>
</dbReference>
<dbReference type="PANTHER" id="PTHR28246:SF1">
    <property type="entry name" value="G1-SPECIFIC TRANSCRIPTIONAL REPRESSOR WHI5-RELATED"/>
    <property type="match status" value="1"/>
</dbReference>